<keyword id="KW-1185">Reference proteome</keyword>
<keyword id="KW-0687">Ribonucleoprotein</keyword>
<keyword id="KW-0689">Ribosomal protein</keyword>
<keyword id="KW-0694">RNA-binding</keyword>
<keyword id="KW-0699">rRNA-binding</keyword>
<name>RL2_PROMH</name>
<evidence type="ECO:0000255" key="1">
    <source>
        <dbReference type="HAMAP-Rule" id="MF_01320"/>
    </source>
</evidence>
<evidence type="ECO:0000256" key="2">
    <source>
        <dbReference type="SAM" id="MobiDB-lite"/>
    </source>
</evidence>
<evidence type="ECO:0000305" key="3"/>
<sequence>MAIVKCKPTSPGRRHVVKVVNPELHKGKPYAPLLEKNSKSGGRNNNGRITTRHIGGGHKQAYRIVDFKRNKDGIPATVERLEYDPNRSANIALVLYADGERRYILAPKGLKAGDKVQSGVDAAIKTGNTLPMRNIPVGSTVHNVEMKPGKGGQLARSAGTYVQIVARDGAYVTIRLRSGEMRKIPSDCRATIGEVGNSEHMLRVLGKAGASRWRGIRPTVRGTAMNPVDHPHGGGEGRNFGKHPVTPWGVQTKGKKTRKNKRTEHFIVHRRTKK</sequence>
<dbReference type="EMBL" id="AM942759">
    <property type="protein sequence ID" value="CAR46384.1"/>
    <property type="molecule type" value="Genomic_DNA"/>
</dbReference>
<dbReference type="RefSeq" id="WP_004246961.1">
    <property type="nucleotide sequence ID" value="NC_010554.1"/>
</dbReference>
<dbReference type="SMR" id="B4F1I7"/>
<dbReference type="EnsemblBacteria" id="CAR46384">
    <property type="protein sequence ID" value="CAR46384"/>
    <property type="gene ID" value="PMI3258"/>
</dbReference>
<dbReference type="GeneID" id="6800567"/>
<dbReference type="KEGG" id="pmr:PMI3258"/>
<dbReference type="eggNOG" id="COG0090">
    <property type="taxonomic scope" value="Bacteria"/>
</dbReference>
<dbReference type="HOGENOM" id="CLU_036235_2_1_6"/>
<dbReference type="Proteomes" id="UP000008319">
    <property type="component" value="Chromosome"/>
</dbReference>
<dbReference type="GO" id="GO:0015934">
    <property type="term" value="C:large ribosomal subunit"/>
    <property type="evidence" value="ECO:0007669"/>
    <property type="project" value="InterPro"/>
</dbReference>
<dbReference type="GO" id="GO:0019843">
    <property type="term" value="F:rRNA binding"/>
    <property type="evidence" value="ECO:0007669"/>
    <property type="project" value="UniProtKB-UniRule"/>
</dbReference>
<dbReference type="GO" id="GO:0003735">
    <property type="term" value="F:structural constituent of ribosome"/>
    <property type="evidence" value="ECO:0007669"/>
    <property type="project" value="InterPro"/>
</dbReference>
<dbReference type="GO" id="GO:0016740">
    <property type="term" value="F:transferase activity"/>
    <property type="evidence" value="ECO:0007669"/>
    <property type="project" value="InterPro"/>
</dbReference>
<dbReference type="GO" id="GO:0002181">
    <property type="term" value="P:cytoplasmic translation"/>
    <property type="evidence" value="ECO:0007669"/>
    <property type="project" value="TreeGrafter"/>
</dbReference>
<dbReference type="FunFam" id="2.30.30.30:FF:000001">
    <property type="entry name" value="50S ribosomal protein L2"/>
    <property type="match status" value="1"/>
</dbReference>
<dbReference type="FunFam" id="2.40.50.140:FF:000003">
    <property type="entry name" value="50S ribosomal protein L2"/>
    <property type="match status" value="1"/>
</dbReference>
<dbReference type="FunFam" id="4.10.950.10:FF:000001">
    <property type="entry name" value="50S ribosomal protein L2"/>
    <property type="match status" value="1"/>
</dbReference>
<dbReference type="Gene3D" id="2.30.30.30">
    <property type="match status" value="1"/>
</dbReference>
<dbReference type="Gene3D" id="2.40.50.140">
    <property type="entry name" value="Nucleic acid-binding proteins"/>
    <property type="match status" value="1"/>
</dbReference>
<dbReference type="Gene3D" id="4.10.950.10">
    <property type="entry name" value="Ribosomal protein L2, domain 3"/>
    <property type="match status" value="1"/>
</dbReference>
<dbReference type="HAMAP" id="MF_01320_B">
    <property type="entry name" value="Ribosomal_uL2_B"/>
    <property type="match status" value="1"/>
</dbReference>
<dbReference type="InterPro" id="IPR012340">
    <property type="entry name" value="NA-bd_OB-fold"/>
</dbReference>
<dbReference type="InterPro" id="IPR014722">
    <property type="entry name" value="Rib_uL2_dom2"/>
</dbReference>
<dbReference type="InterPro" id="IPR002171">
    <property type="entry name" value="Ribosomal_uL2"/>
</dbReference>
<dbReference type="InterPro" id="IPR005880">
    <property type="entry name" value="Ribosomal_uL2_bac/org-type"/>
</dbReference>
<dbReference type="InterPro" id="IPR022669">
    <property type="entry name" value="Ribosomal_uL2_C"/>
</dbReference>
<dbReference type="InterPro" id="IPR022671">
    <property type="entry name" value="Ribosomal_uL2_CS"/>
</dbReference>
<dbReference type="InterPro" id="IPR014726">
    <property type="entry name" value="Ribosomal_uL2_dom3"/>
</dbReference>
<dbReference type="InterPro" id="IPR022666">
    <property type="entry name" value="Ribosomal_uL2_RNA-bd_dom"/>
</dbReference>
<dbReference type="InterPro" id="IPR008991">
    <property type="entry name" value="Translation_prot_SH3-like_sf"/>
</dbReference>
<dbReference type="NCBIfam" id="TIGR01171">
    <property type="entry name" value="rplB_bact"/>
    <property type="match status" value="1"/>
</dbReference>
<dbReference type="PANTHER" id="PTHR13691:SF5">
    <property type="entry name" value="LARGE RIBOSOMAL SUBUNIT PROTEIN UL2M"/>
    <property type="match status" value="1"/>
</dbReference>
<dbReference type="PANTHER" id="PTHR13691">
    <property type="entry name" value="RIBOSOMAL PROTEIN L2"/>
    <property type="match status" value="1"/>
</dbReference>
<dbReference type="Pfam" id="PF00181">
    <property type="entry name" value="Ribosomal_L2"/>
    <property type="match status" value="1"/>
</dbReference>
<dbReference type="Pfam" id="PF03947">
    <property type="entry name" value="Ribosomal_L2_C"/>
    <property type="match status" value="1"/>
</dbReference>
<dbReference type="PIRSF" id="PIRSF002158">
    <property type="entry name" value="Ribosomal_L2"/>
    <property type="match status" value="1"/>
</dbReference>
<dbReference type="SMART" id="SM01383">
    <property type="entry name" value="Ribosomal_L2"/>
    <property type="match status" value="1"/>
</dbReference>
<dbReference type="SMART" id="SM01382">
    <property type="entry name" value="Ribosomal_L2_C"/>
    <property type="match status" value="1"/>
</dbReference>
<dbReference type="SUPFAM" id="SSF50249">
    <property type="entry name" value="Nucleic acid-binding proteins"/>
    <property type="match status" value="1"/>
</dbReference>
<dbReference type="SUPFAM" id="SSF50104">
    <property type="entry name" value="Translation proteins SH3-like domain"/>
    <property type="match status" value="1"/>
</dbReference>
<dbReference type="PROSITE" id="PS00467">
    <property type="entry name" value="RIBOSOMAL_L2"/>
    <property type="match status" value="1"/>
</dbReference>
<feature type="chain" id="PRO_1000141598" description="Large ribosomal subunit protein uL2">
    <location>
        <begin position="1"/>
        <end position="274"/>
    </location>
</feature>
<feature type="region of interest" description="Disordered" evidence="2">
    <location>
        <begin position="28"/>
        <end position="53"/>
    </location>
</feature>
<feature type="region of interest" description="Disordered" evidence="2">
    <location>
        <begin position="221"/>
        <end position="274"/>
    </location>
</feature>
<feature type="compositionally biased region" description="Low complexity" evidence="2">
    <location>
        <begin position="39"/>
        <end position="48"/>
    </location>
</feature>
<feature type="compositionally biased region" description="Basic residues" evidence="2">
    <location>
        <begin position="253"/>
        <end position="274"/>
    </location>
</feature>
<reference key="1">
    <citation type="journal article" date="2008" name="J. Bacteriol.">
        <title>Complete genome sequence of uropathogenic Proteus mirabilis, a master of both adherence and motility.</title>
        <authorList>
            <person name="Pearson M.M."/>
            <person name="Sebaihia M."/>
            <person name="Churcher C."/>
            <person name="Quail M.A."/>
            <person name="Seshasayee A.S."/>
            <person name="Luscombe N.M."/>
            <person name="Abdellah Z."/>
            <person name="Arrosmith C."/>
            <person name="Atkin B."/>
            <person name="Chillingworth T."/>
            <person name="Hauser H."/>
            <person name="Jagels K."/>
            <person name="Moule S."/>
            <person name="Mungall K."/>
            <person name="Norbertczak H."/>
            <person name="Rabbinowitsch E."/>
            <person name="Walker D."/>
            <person name="Whithead S."/>
            <person name="Thomson N.R."/>
            <person name="Rather P.N."/>
            <person name="Parkhill J."/>
            <person name="Mobley H.L.T."/>
        </authorList>
    </citation>
    <scope>NUCLEOTIDE SEQUENCE [LARGE SCALE GENOMIC DNA]</scope>
    <source>
        <strain>HI4320</strain>
    </source>
</reference>
<accession>B4F1I7</accession>
<comment type="function">
    <text evidence="1">One of the primary rRNA binding proteins. Required for association of the 30S and 50S subunits to form the 70S ribosome, for tRNA binding and peptide bond formation. It has been suggested to have peptidyltransferase activity; this is somewhat controversial. Makes several contacts with the 16S rRNA in the 70S ribosome.</text>
</comment>
<comment type="subunit">
    <text evidence="1">Part of the 50S ribosomal subunit. Forms a bridge to the 30S subunit in the 70S ribosome.</text>
</comment>
<comment type="similarity">
    <text evidence="1">Belongs to the universal ribosomal protein uL2 family.</text>
</comment>
<protein>
    <recommendedName>
        <fullName evidence="1">Large ribosomal subunit protein uL2</fullName>
    </recommendedName>
    <alternativeName>
        <fullName evidence="3">50S ribosomal protein L2</fullName>
    </alternativeName>
</protein>
<proteinExistence type="inferred from homology"/>
<organism>
    <name type="scientific">Proteus mirabilis (strain HI4320)</name>
    <dbReference type="NCBI Taxonomy" id="529507"/>
    <lineage>
        <taxon>Bacteria</taxon>
        <taxon>Pseudomonadati</taxon>
        <taxon>Pseudomonadota</taxon>
        <taxon>Gammaproteobacteria</taxon>
        <taxon>Enterobacterales</taxon>
        <taxon>Morganellaceae</taxon>
        <taxon>Proteus</taxon>
    </lineage>
</organism>
<gene>
    <name evidence="1" type="primary">rplB</name>
    <name type="ordered locus">PMI3258</name>
</gene>